<keyword id="KW-0131">Cell cycle</keyword>
<keyword id="KW-0132">Cell division</keyword>
<keyword id="KW-0159">Chromosome partition</keyword>
<keyword id="KW-0963">Cytoplasm</keyword>
<keyword id="KW-0229">DNA integration</keyword>
<keyword id="KW-0233">DNA recombination</keyword>
<keyword id="KW-0238">DNA-binding</keyword>
<keyword id="KW-1185">Reference proteome</keyword>
<evidence type="ECO:0000255" key="1">
    <source>
        <dbReference type="HAMAP-Rule" id="MF_01816"/>
    </source>
</evidence>
<evidence type="ECO:0000255" key="2">
    <source>
        <dbReference type="PROSITE-ProRule" id="PRU01246"/>
    </source>
</evidence>
<evidence type="ECO:0000255" key="3">
    <source>
        <dbReference type="PROSITE-ProRule" id="PRU01248"/>
    </source>
</evidence>
<proteinExistence type="inferred from homology"/>
<reference key="1">
    <citation type="journal article" date="2007" name="J. Bacteriol.">
        <title>Genome sequence of Avery's virulent serotype 2 strain D39 of Streptococcus pneumoniae and comparison with that of unencapsulated laboratory strain R6.</title>
        <authorList>
            <person name="Lanie J.A."/>
            <person name="Ng W.-L."/>
            <person name="Kazmierczak K.M."/>
            <person name="Andrzejewski T.M."/>
            <person name="Davidsen T.M."/>
            <person name="Wayne K.J."/>
            <person name="Tettelin H."/>
            <person name="Glass J.I."/>
            <person name="Winkler M.E."/>
        </authorList>
    </citation>
    <scope>NUCLEOTIDE SEQUENCE [LARGE SCALE GENOMIC DNA]</scope>
    <source>
        <strain>D39 / NCTC 7466</strain>
    </source>
</reference>
<sequence length="356" mass="41171">MKREILLERIDKLKQLMPWYVLEYYQSKLAVPYSFTTLYEYLKEYDRFFSWVLESGISNADKISDIPLSVLENMSKKDMESFILYLRERPLLNANTTKQGVSQTTINRTLSALSSLYKYLTEEVENDQGEPYFYRNVMKKVSTKKKKETLAARAENIKQKLFLGDETEGFLTYIDQEHPQQLSNRALSSFNKNKERDLAIIALLLASGVRLSEAVNLDLRDLNLKMMVIDVTRKGGKRDSVNVAAFAKPYLENYLAIRNQRYKTEKTDTALFLTLYRGVPNRIDASSVEKMVAKYSEDFKVRVTPHKLRHTLATRLYDATKSQVLVSHQLGHASTQVTDLYTHIVNDEQKNALDSL</sequence>
<organism>
    <name type="scientific">Streptococcus pneumoniae serotype 2 (strain D39 / NCTC 7466)</name>
    <dbReference type="NCBI Taxonomy" id="373153"/>
    <lineage>
        <taxon>Bacteria</taxon>
        <taxon>Bacillati</taxon>
        <taxon>Bacillota</taxon>
        <taxon>Bacilli</taxon>
        <taxon>Lactobacillales</taxon>
        <taxon>Streptococcaceae</taxon>
        <taxon>Streptococcus</taxon>
    </lineage>
</organism>
<feature type="chain" id="PRO_1000070248" description="Tyrosine recombinase XerS">
    <location>
        <begin position="1"/>
        <end position="356"/>
    </location>
</feature>
<feature type="domain" description="Core-binding (CB)" evidence="3">
    <location>
        <begin position="16"/>
        <end position="121"/>
    </location>
</feature>
<feature type="domain" description="Tyr recombinase" evidence="2">
    <location>
        <begin position="169"/>
        <end position="354"/>
    </location>
</feature>
<feature type="active site" evidence="1">
    <location>
        <position position="210"/>
    </location>
</feature>
<feature type="active site" evidence="1">
    <location>
        <position position="234"/>
    </location>
</feature>
<feature type="active site" evidence="1">
    <location>
        <position position="306"/>
    </location>
</feature>
<feature type="active site" evidence="1">
    <location>
        <position position="309"/>
    </location>
</feature>
<feature type="active site" evidence="1">
    <location>
        <position position="332"/>
    </location>
</feature>
<feature type="active site" description="O-(3'-phospho-DNA)-tyrosine intermediate" evidence="1">
    <location>
        <position position="341"/>
    </location>
</feature>
<accession>Q04KF1</accession>
<dbReference type="EMBL" id="CP000410">
    <property type="protein sequence ID" value="ABJ54460.1"/>
    <property type="molecule type" value="Genomic_DNA"/>
</dbReference>
<dbReference type="RefSeq" id="WP_000817882.1">
    <property type="nucleotide sequence ID" value="NZ_JAMLJR010000014.1"/>
</dbReference>
<dbReference type="SMR" id="Q04KF1"/>
<dbReference type="PaxDb" id="373153-SPD_1023"/>
<dbReference type="KEGG" id="spd:SPD_1023"/>
<dbReference type="eggNOG" id="COG4974">
    <property type="taxonomic scope" value="Bacteria"/>
</dbReference>
<dbReference type="HOGENOM" id="CLU_027562_9_6_9"/>
<dbReference type="BioCyc" id="SPNE373153:G1G6V-1113-MONOMER"/>
<dbReference type="Proteomes" id="UP000001452">
    <property type="component" value="Chromosome"/>
</dbReference>
<dbReference type="GO" id="GO:0005737">
    <property type="term" value="C:cytoplasm"/>
    <property type="evidence" value="ECO:0007669"/>
    <property type="project" value="UniProtKB-SubCell"/>
</dbReference>
<dbReference type="GO" id="GO:0003677">
    <property type="term" value="F:DNA binding"/>
    <property type="evidence" value="ECO:0007669"/>
    <property type="project" value="UniProtKB-KW"/>
</dbReference>
<dbReference type="GO" id="GO:0009037">
    <property type="term" value="F:tyrosine-based site-specific recombinase activity"/>
    <property type="evidence" value="ECO:0007669"/>
    <property type="project" value="UniProtKB-UniRule"/>
</dbReference>
<dbReference type="GO" id="GO:0051301">
    <property type="term" value="P:cell division"/>
    <property type="evidence" value="ECO:0007669"/>
    <property type="project" value="UniProtKB-KW"/>
</dbReference>
<dbReference type="GO" id="GO:0007059">
    <property type="term" value="P:chromosome segregation"/>
    <property type="evidence" value="ECO:0007669"/>
    <property type="project" value="UniProtKB-UniRule"/>
</dbReference>
<dbReference type="GO" id="GO:0006310">
    <property type="term" value="P:DNA recombination"/>
    <property type="evidence" value="ECO:0007669"/>
    <property type="project" value="UniProtKB-UniRule"/>
</dbReference>
<dbReference type="Gene3D" id="1.10.150.130">
    <property type="match status" value="1"/>
</dbReference>
<dbReference type="Gene3D" id="1.10.443.10">
    <property type="entry name" value="Intergrase catalytic core"/>
    <property type="match status" value="1"/>
</dbReference>
<dbReference type="HAMAP" id="MF_01816">
    <property type="entry name" value="Recomb_XerS"/>
    <property type="match status" value="1"/>
</dbReference>
<dbReference type="InterPro" id="IPR044068">
    <property type="entry name" value="CB"/>
</dbReference>
<dbReference type="InterPro" id="IPR011010">
    <property type="entry name" value="DNA_brk_join_enz"/>
</dbReference>
<dbReference type="InterPro" id="IPR013762">
    <property type="entry name" value="Integrase-like_cat_sf"/>
</dbReference>
<dbReference type="InterPro" id="IPR002104">
    <property type="entry name" value="Integrase_catalytic"/>
</dbReference>
<dbReference type="InterPro" id="IPR010998">
    <property type="entry name" value="Integrase_recombinase_N"/>
</dbReference>
<dbReference type="InterPro" id="IPR004107">
    <property type="entry name" value="Integrase_SAM-like_N"/>
</dbReference>
<dbReference type="InterPro" id="IPR023670">
    <property type="entry name" value="Recomb_XerS"/>
</dbReference>
<dbReference type="InterPro" id="IPR050090">
    <property type="entry name" value="Tyrosine_recombinase_XerCD"/>
</dbReference>
<dbReference type="NCBIfam" id="NF003462">
    <property type="entry name" value="PRK05084.1"/>
    <property type="match status" value="1"/>
</dbReference>
<dbReference type="PANTHER" id="PTHR30349">
    <property type="entry name" value="PHAGE INTEGRASE-RELATED"/>
    <property type="match status" value="1"/>
</dbReference>
<dbReference type="PANTHER" id="PTHR30349:SF77">
    <property type="entry name" value="TYROSINE RECOMBINASE XERC"/>
    <property type="match status" value="1"/>
</dbReference>
<dbReference type="Pfam" id="PF02899">
    <property type="entry name" value="Phage_int_SAM_1"/>
    <property type="match status" value="1"/>
</dbReference>
<dbReference type="Pfam" id="PF00589">
    <property type="entry name" value="Phage_integrase"/>
    <property type="match status" value="1"/>
</dbReference>
<dbReference type="SUPFAM" id="SSF56349">
    <property type="entry name" value="DNA breaking-rejoining enzymes"/>
    <property type="match status" value="1"/>
</dbReference>
<dbReference type="PROSITE" id="PS51900">
    <property type="entry name" value="CB"/>
    <property type="match status" value="1"/>
</dbReference>
<dbReference type="PROSITE" id="PS51898">
    <property type="entry name" value="TYR_RECOMBINASE"/>
    <property type="match status" value="1"/>
</dbReference>
<name>XERS_STRP2</name>
<gene>
    <name evidence="1" type="primary">xerS</name>
    <name type="ordered locus">SPD_1023</name>
</gene>
<protein>
    <recommendedName>
        <fullName evidence="1">Tyrosine recombinase XerS</fullName>
    </recommendedName>
</protein>
<comment type="function">
    <text evidence="1">Site-specific tyrosine recombinase, which acts by catalyzing the cutting and rejoining of the recombining DNA molecules. Essential to convert dimers of the bacterial chromosome into monomers to permit their segregation at cell division.</text>
</comment>
<comment type="activity regulation">
    <text evidence="1">FtsK is required for recombination.</text>
</comment>
<comment type="subcellular location">
    <subcellularLocation>
        <location evidence="1">Cytoplasm</location>
    </subcellularLocation>
</comment>
<comment type="similarity">
    <text evidence="1">Belongs to the 'phage' integrase family. XerS subfamily.</text>
</comment>